<name>AROA_BRUMB</name>
<reference key="1">
    <citation type="submission" date="2009-03" db="EMBL/GenBank/DDBJ databases">
        <title>Brucella melitensis ATCC 23457 whole genome shotgun sequencing project.</title>
        <authorList>
            <person name="Setubal J.C."/>
            <person name="Boyle S."/>
            <person name="Crasta O.R."/>
            <person name="Gillespie J.J."/>
            <person name="Kenyon R.W."/>
            <person name="Lu J."/>
            <person name="Mane S."/>
            <person name="Nagrani S."/>
            <person name="Shallom J.M."/>
            <person name="Shallom S."/>
            <person name="Shukla M."/>
            <person name="Snyder E.E."/>
            <person name="Sobral B.W."/>
            <person name="Wattam A.R."/>
            <person name="Will R."/>
            <person name="Williams K."/>
            <person name="Yoo H."/>
            <person name="Munk C."/>
            <person name="Tapia R."/>
            <person name="Han C."/>
            <person name="Detter J.C."/>
            <person name="Bruce D."/>
            <person name="Brettin T.S."/>
        </authorList>
    </citation>
    <scope>NUCLEOTIDE SEQUENCE [LARGE SCALE GENOMIC DNA]</scope>
    <source>
        <strain>ATCC 23457</strain>
    </source>
</reference>
<proteinExistence type="inferred from homology"/>
<gene>
    <name evidence="1" type="primary">aroA</name>
    <name type="ordered locus">BMEA_A0026</name>
</gene>
<keyword id="KW-0028">Amino-acid biosynthesis</keyword>
<keyword id="KW-0057">Aromatic amino acid biosynthesis</keyword>
<keyword id="KW-0963">Cytoplasm</keyword>
<keyword id="KW-0808">Transferase</keyword>
<dbReference type="EC" id="2.5.1.19" evidence="1"/>
<dbReference type="EMBL" id="CP001488">
    <property type="protein sequence ID" value="ACN99847.1"/>
    <property type="molecule type" value="Genomic_DNA"/>
</dbReference>
<dbReference type="RefSeq" id="WP_004685324.1">
    <property type="nucleotide sequence ID" value="NC_012441.1"/>
</dbReference>
<dbReference type="SMR" id="C0RG90"/>
<dbReference type="GeneID" id="97534538"/>
<dbReference type="KEGG" id="bmi:BMEA_A0026"/>
<dbReference type="HOGENOM" id="CLU_024321_0_1_5"/>
<dbReference type="UniPathway" id="UPA00053">
    <property type="reaction ID" value="UER00089"/>
</dbReference>
<dbReference type="Proteomes" id="UP000001748">
    <property type="component" value="Chromosome I"/>
</dbReference>
<dbReference type="GO" id="GO:0005737">
    <property type="term" value="C:cytoplasm"/>
    <property type="evidence" value="ECO:0007669"/>
    <property type="project" value="UniProtKB-SubCell"/>
</dbReference>
<dbReference type="GO" id="GO:0003866">
    <property type="term" value="F:3-phosphoshikimate 1-carboxyvinyltransferase activity"/>
    <property type="evidence" value="ECO:0007669"/>
    <property type="project" value="UniProtKB-UniRule"/>
</dbReference>
<dbReference type="GO" id="GO:0008652">
    <property type="term" value="P:amino acid biosynthetic process"/>
    <property type="evidence" value="ECO:0007669"/>
    <property type="project" value="UniProtKB-KW"/>
</dbReference>
<dbReference type="GO" id="GO:0009073">
    <property type="term" value="P:aromatic amino acid family biosynthetic process"/>
    <property type="evidence" value="ECO:0007669"/>
    <property type="project" value="UniProtKB-KW"/>
</dbReference>
<dbReference type="GO" id="GO:0009423">
    <property type="term" value="P:chorismate biosynthetic process"/>
    <property type="evidence" value="ECO:0007669"/>
    <property type="project" value="UniProtKB-UniRule"/>
</dbReference>
<dbReference type="CDD" id="cd01556">
    <property type="entry name" value="EPSP_synthase"/>
    <property type="match status" value="1"/>
</dbReference>
<dbReference type="FunFam" id="3.65.10.10:FF:000006">
    <property type="entry name" value="3-phosphoshikimate 1-carboxyvinyltransferase"/>
    <property type="match status" value="1"/>
</dbReference>
<dbReference type="Gene3D" id="3.65.10.10">
    <property type="entry name" value="Enolpyruvate transferase domain"/>
    <property type="match status" value="2"/>
</dbReference>
<dbReference type="HAMAP" id="MF_00210">
    <property type="entry name" value="EPSP_synth"/>
    <property type="match status" value="1"/>
</dbReference>
<dbReference type="InterPro" id="IPR001986">
    <property type="entry name" value="Enolpyruvate_Tfrase_dom"/>
</dbReference>
<dbReference type="InterPro" id="IPR036968">
    <property type="entry name" value="Enolpyruvate_Tfrase_sf"/>
</dbReference>
<dbReference type="InterPro" id="IPR006264">
    <property type="entry name" value="EPSP_synthase"/>
</dbReference>
<dbReference type="InterPro" id="IPR023193">
    <property type="entry name" value="EPSP_synthase_CS"/>
</dbReference>
<dbReference type="InterPro" id="IPR013792">
    <property type="entry name" value="RNA3'P_cycl/enolpyr_Trfase_a/b"/>
</dbReference>
<dbReference type="NCBIfam" id="TIGR01356">
    <property type="entry name" value="aroA"/>
    <property type="match status" value="1"/>
</dbReference>
<dbReference type="PANTHER" id="PTHR21090">
    <property type="entry name" value="AROM/DEHYDROQUINATE SYNTHASE"/>
    <property type="match status" value="1"/>
</dbReference>
<dbReference type="PANTHER" id="PTHR21090:SF5">
    <property type="entry name" value="PENTAFUNCTIONAL AROM POLYPEPTIDE"/>
    <property type="match status" value="1"/>
</dbReference>
<dbReference type="Pfam" id="PF00275">
    <property type="entry name" value="EPSP_synthase"/>
    <property type="match status" value="1"/>
</dbReference>
<dbReference type="PIRSF" id="PIRSF000505">
    <property type="entry name" value="EPSPS"/>
    <property type="match status" value="1"/>
</dbReference>
<dbReference type="SUPFAM" id="SSF55205">
    <property type="entry name" value="EPT/RTPC-like"/>
    <property type="match status" value="1"/>
</dbReference>
<dbReference type="PROSITE" id="PS00104">
    <property type="entry name" value="EPSP_SYNTHASE_1"/>
    <property type="match status" value="1"/>
</dbReference>
<dbReference type="PROSITE" id="PS00885">
    <property type="entry name" value="EPSP_SYNTHASE_2"/>
    <property type="match status" value="1"/>
</dbReference>
<accession>C0RG90</accession>
<evidence type="ECO:0000255" key="1">
    <source>
        <dbReference type="HAMAP-Rule" id="MF_00210"/>
    </source>
</evidence>
<comment type="function">
    <text evidence="1">Catalyzes the transfer of the enolpyruvyl moiety of phosphoenolpyruvate (PEP) to the 5-hydroxyl of shikimate-3-phosphate (S3P) to produce enolpyruvyl shikimate-3-phosphate and inorganic phosphate.</text>
</comment>
<comment type="catalytic activity">
    <reaction evidence="1">
        <text>3-phosphoshikimate + phosphoenolpyruvate = 5-O-(1-carboxyvinyl)-3-phosphoshikimate + phosphate</text>
        <dbReference type="Rhea" id="RHEA:21256"/>
        <dbReference type="ChEBI" id="CHEBI:43474"/>
        <dbReference type="ChEBI" id="CHEBI:57701"/>
        <dbReference type="ChEBI" id="CHEBI:58702"/>
        <dbReference type="ChEBI" id="CHEBI:145989"/>
        <dbReference type="EC" id="2.5.1.19"/>
    </reaction>
    <physiologicalReaction direction="left-to-right" evidence="1">
        <dbReference type="Rhea" id="RHEA:21257"/>
    </physiologicalReaction>
</comment>
<comment type="pathway">
    <text evidence="1">Metabolic intermediate biosynthesis; chorismate biosynthesis; chorismate from D-erythrose 4-phosphate and phosphoenolpyruvate: step 6/7.</text>
</comment>
<comment type="subunit">
    <text evidence="1">Monomer.</text>
</comment>
<comment type="subcellular location">
    <subcellularLocation>
        <location evidence="1">Cytoplasm</location>
    </subcellularLocation>
</comment>
<comment type="similarity">
    <text evidence="1">Belongs to the EPSP synthase family.</text>
</comment>
<feature type="chain" id="PRO_1000124672" description="3-phosphoshikimate 1-carboxyvinyltransferase">
    <location>
        <begin position="1"/>
        <end position="450"/>
    </location>
</feature>
<feature type="active site" description="Proton acceptor" evidence="1">
    <location>
        <position position="326"/>
    </location>
</feature>
<feature type="binding site" evidence="1">
    <location>
        <position position="28"/>
    </location>
    <ligand>
        <name>3-phosphoshikimate</name>
        <dbReference type="ChEBI" id="CHEBI:145989"/>
    </ligand>
</feature>
<feature type="binding site" evidence="1">
    <location>
        <position position="28"/>
    </location>
    <ligand>
        <name>phosphoenolpyruvate</name>
        <dbReference type="ChEBI" id="CHEBI:58702"/>
    </ligand>
</feature>
<feature type="binding site" evidence="1">
    <location>
        <position position="29"/>
    </location>
    <ligand>
        <name>3-phosphoshikimate</name>
        <dbReference type="ChEBI" id="CHEBI:145989"/>
    </ligand>
</feature>
<feature type="binding site" evidence="1">
    <location>
        <position position="33"/>
    </location>
    <ligand>
        <name>3-phosphoshikimate</name>
        <dbReference type="ChEBI" id="CHEBI:145989"/>
    </ligand>
</feature>
<feature type="binding site" evidence="1">
    <location>
        <position position="100"/>
    </location>
    <ligand>
        <name>phosphoenolpyruvate</name>
        <dbReference type="ChEBI" id="CHEBI:58702"/>
    </ligand>
</feature>
<feature type="binding site" evidence="1">
    <location>
        <position position="128"/>
    </location>
    <ligand>
        <name>phosphoenolpyruvate</name>
        <dbReference type="ChEBI" id="CHEBI:58702"/>
    </ligand>
</feature>
<feature type="binding site" evidence="1">
    <location>
        <position position="173"/>
    </location>
    <ligand>
        <name>3-phosphoshikimate</name>
        <dbReference type="ChEBI" id="CHEBI:145989"/>
    </ligand>
</feature>
<feature type="binding site" evidence="1">
    <location>
        <position position="175"/>
    </location>
    <ligand>
        <name>3-phosphoshikimate</name>
        <dbReference type="ChEBI" id="CHEBI:145989"/>
    </ligand>
</feature>
<feature type="binding site" evidence="1">
    <location>
        <position position="175"/>
    </location>
    <ligand>
        <name>phosphoenolpyruvate</name>
        <dbReference type="ChEBI" id="CHEBI:58702"/>
    </ligand>
</feature>
<feature type="binding site" evidence="1">
    <location>
        <position position="326"/>
    </location>
    <ligand>
        <name>3-phosphoshikimate</name>
        <dbReference type="ChEBI" id="CHEBI:145989"/>
    </ligand>
</feature>
<feature type="binding site" evidence="1">
    <location>
        <position position="353"/>
    </location>
    <ligand>
        <name>3-phosphoshikimate</name>
        <dbReference type="ChEBI" id="CHEBI:145989"/>
    </ligand>
</feature>
<feature type="binding site" evidence="1">
    <location>
        <position position="357"/>
    </location>
    <ligand>
        <name>phosphoenolpyruvate</name>
        <dbReference type="ChEBI" id="CHEBI:58702"/>
    </ligand>
</feature>
<feature type="binding site" evidence="1">
    <location>
        <position position="402"/>
    </location>
    <ligand>
        <name>phosphoenolpyruvate</name>
        <dbReference type="ChEBI" id="CHEBI:58702"/>
    </ligand>
</feature>
<organism>
    <name type="scientific">Brucella melitensis biotype 2 (strain ATCC 23457)</name>
    <dbReference type="NCBI Taxonomy" id="546272"/>
    <lineage>
        <taxon>Bacteria</taxon>
        <taxon>Pseudomonadati</taxon>
        <taxon>Pseudomonadota</taxon>
        <taxon>Alphaproteobacteria</taxon>
        <taxon>Hyphomicrobiales</taxon>
        <taxon>Brucellaceae</taxon>
        <taxon>Brucella/Ochrobactrum group</taxon>
        <taxon>Brucella</taxon>
    </lineage>
</organism>
<protein>
    <recommendedName>
        <fullName evidence="1">3-phosphoshikimate 1-carboxyvinyltransferase</fullName>
        <ecNumber evidence="1">2.5.1.19</ecNumber>
    </recommendedName>
    <alternativeName>
        <fullName evidence="1">5-enolpyruvylshikimate-3-phosphate synthase</fullName>
        <shortName evidence="1">EPSP synthase</shortName>
        <shortName evidence="1">EPSPS</shortName>
    </alternativeName>
</protein>
<sequence>MSHSACPKPATARHSQALTGEIRIPGDKSISHRSFMFGGLASGKTRITGLLEGEDVINTGRAMQAMGARIRKEGDVWIINGVGNGCLLQPEAPLDFGNAGTGARLTMGLVGTYDMKTSFIGDASLSKRPMGRVLNPLREMGVQVEAAEGDRMPLTLIGPRTANPIAYRVPMASAQVKSAVLLAGLNTPGVTTVIEPVMTRDHTEKMLQGFGADLTVETDKDGVRHIRIVGQGKLTGQTIDVPGDPSSTAFPLVAALLVEGSDVTIRNVLMNPTRTGLILTLQEMGADIEIIDPRLAGGEDVADLRVKASKLKGVVVPPERAPSMIDEYPVLAIAASFAEGETVMDGLDELRVKESDRLAAVARGLEANGVDCTEGEMSLTVRGRPGGKGLGGGTVATHLDHRIAMSFLVMGLASEKPVTVDDSTMIATSFPEFMGMMAGLGAKIAESGAE</sequence>